<name>RL11_CLOD6</name>
<evidence type="ECO:0000255" key="1">
    <source>
        <dbReference type="HAMAP-Rule" id="MF_00736"/>
    </source>
</evidence>
<evidence type="ECO:0000305" key="2"/>
<feature type="chain" id="PRO_0000258140" description="Large ribosomal subunit protein uL11">
    <location>
        <begin position="1"/>
        <end position="141"/>
    </location>
</feature>
<organism>
    <name type="scientific">Clostridioides difficile (strain 630)</name>
    <name type="common">Peptoclostridium difficile</name>
    <dbReference type="NCBI Taxonomy" id="272563"/>
    <lineage>
        <taxon>Bacteria</taxon>
        <taxon>Bacillati</taxon>
        <taxon>Bacillota</taxon>
        <taxon>Clostridia</taxon>
        <taxon>Peptostreptococcales</taxon>
        <taxon>Peptostreptococcaceae</taxon>
        <taxon>Clostridioides</taxon>
    </lineage>
</organism>
<sequence>MAKKVIGQIKLQIPAGKATPAPPVGPALGQHGVNIMGFTKEFNAKTADQAGMIIPVVITVYQDRSFSFITKTPPAAVLIKKALNLKSGSGEPNKKKVAKMTSAQVREIAELKMPDLNAASVEAAMSMIAGTARSMGVVIED</sequence>
<gene>
    <name evidence="1" type="primary">rplK</name>
    <name type="ordered locus">CD630_00610</name>
</gene>
<reference key="1">
    <citation type="journal article" date="2006" name="Nat. Genet.">
        <title>The multidrug-resistant human pathogen Clostridium difficile has a highly mobile, mosaic genome.</title>
        <authorList>
            <person name="Sebaihia M."/>
            <person name="Wren B.W."/>
            <person name="Mullany P."/>
            <person name="Fairweather N.F."/>
            <person name="Minton N."/>
            <person name="Stabler R."/>
            <person name="Thomson N.R."/>
            <person name="Roberts A.P."/>
            <person name="Cerdeno-Tarraga A.M."/>
            <person name="Wang H."/>
            <person name="Holden M.T.G."/>
            <person name="Wright A."/>
            <person name="Churcher C."/>
            <person name="Quail M.A."/>
            <person name="Baker S."/>
            <person name="Bason N."/>
            <person name="Brooks K."/>
            <person name="Chillingworth T."/>
            <person name="Cronin A."/>
            <person name="Davis P."/>
            <person name="Dowd L."/>
            <person name="Fraser A."/>
            <person name="Feltwell T."/>
            <person name="Hance Z."/>
            <person name="Holroyd S."/>
            <person name="Jagels K."/>
            <person name="Moule S."/>
            <person name="Mungall K."/>
            <person name="Price C."/>
            <person name="Rabbinowitsch E."/>
            <person name="Sharp S."/>
            <person name="Simmonds M."/>
            <person name="Stevens K."/>
            <person name="Unwin L."/>
            <person name="Whithead S."/>
            <person name="Dupuy B."/>
            <person name="Dougan G."/>
            <person name="Barrell B."/>
            <person name="Parkhill J."/>
        </authorList>
    </citation>
    <scope>NUCLEOTIDE SEQUENCE [LARGE SCALE GENOMIC DNA]</scope>
    <source>
        <strain>630</strain>
    </source>
</reference>
<dbReference type="EMBL" id="AM180355">
    <property type="protein sequence ID" value="CAJ66876.1"/>
    <property type="molecule type" value="Genomic_DNA"/>
</dbReference>
<dbReference type="RefSeq" id="WP_003421189.1">
    <property type="nucleotide sequence ID" value="NZ_JAUPES010000049.1"/>
</dbReference>
<dbReference type="RefSeq" id="YP_001086525.1">
    <property type="nucleotide sequence ID" value="NC_009089.1"/>
</dbReference>
<dbReference type="SMR" id="Q18CE5"/>
<dbReference type="STRING" id="272563.CD630_00610"/>
<dbReference type="EnsemblBacteria" id="CAJ66876">
    <property type="protein sequence ID" value="CAJ66876"/>
    <property type="gene ID" value="CD630_00610"/>
</dbReference>
<dbReference type="GeneID" id="66352559"/>
<dbReference type="KEGG" id="cdf:CD630_00610"/>
<dbReference type="KEGG" id="pdc:CDIF630_00126"/>
<dbReference type="PATRIC" id="fig|272563.120.peg.67"/>
<dbReference type="eggNOG" id="COG0080">
    <property type="taxonomic scope" value="Bacteria"/>
</dbReference>
<dbReference type="OrthoDB" id="9802408at2"/>
<dbReference type="PhylomeDB" id="Q18CE5"/>
<dbReference type="BioCyc" id="PDIF272563:G12WB-115-MONOMER"/>
<dbReference type="Proteomes" id="UP000001978">
    <property type="component" value="Chromosome"/>
</dbReference>
<dbReference type="GO" id="GO:0022625">
    <property type="term" value="C:cytosolic large ribosomal subunit"/>
    <property type="evidence" value="ECO:0007669"/>
    <property type="project" value="TreeGrafter"/>
</dbReference>
<dbReference type="GO" id="GO:0070180">
    <property type="term" value="F:large ribosomal subunit rRNA binding"/>
    <property type="evidence" value="ECO:0007669"/>
    <property type="project" value="UniProtKB-UniRule"/>
</dbReference>
<dbReference type="GO" id="GO:0003735">
    <property type="term" value="F:structural constituent of ribosome"/>
    <property type="evidence" value="ECO:0007669"/>
    <property type="project" value="InterPro"/>
</dbReference>
<dbReference type="GO" id="GO:0006412">
    <property type="term" value="P:translation"/>
    <property type="evidence" value="ECO:0007669"/>
    <property type="project" value="UniProtKB-UniRule"/>
</dbReference>
<dbReference type="CDD" id="cd00349">
    <property type="entry name" value="Ribosomal_L11"/>
    <property type="match status" value="1"/>
</dbReference>
<dbReference type="FunFam" id="1.10.10.250:FF:000001">
    <property type="entry name" value="50S ribosomal protein L11"/>
    <property type="match status" value="1"/>
</dbReference>
<dbReference type="FunFam" id="3.30.1550.10:FF:000001">
    <property type="entry name" value="50S ribosomal protein L11"/>
    <property type="match status" value="1"/>
</dbReference>
<dbReference type="Gene3D" id="1.10.10.250">
    <property type="entry name" value="Ribosomal protein L11, C-terminal domain"/>
    <property type="match status" value="1"/>
</dbReference>
<dbReference type="Gene3D" id="3.30.1550.10">
    <property type="entry name" value="Ribosomal protein L11/L12, N-terminal domain"/>
    <property type="match status" value="1"/>
</dbReference>
<dbReference type="HAMAP" id="MF_00736">
    <property type="entry name" value="Ribosomal_uL11"/>
    <property type="match status" value="1"/>
</dbReference>
<dbReference type="InterPro" id="IPR000911">
    <property type="entry name" value="Ribosomal_uL11"/>
</dbReference>
<dbReference type="InterPro" id="IPR006519">
    <property type="entry name" value="Ribosomal_uL11_bac-typ"/>
</dbReference>
<dbReference type="InterPro" id="IPR020783">
    <property type="entry name" value="Ribosomal_uL11_C"/>
</dbReference>
<dbReference type="InterPro" id="IPR036769">
    <property type="entry name" value="Ribosomal_uL11_C_sf"/>
</dbReference>
<dbReference type="InterPro" id="IPR020784">
    <property type="entry name" value="Ribosomal_uL11_N"/>
</dbReference>
<dbReference type="InterPro" id="IPR036796">
    <property type="entry name" value="Ribosomal_uL11_N_sf"/>
</dbReference>
<dbReference type="NCBIfam" id="TIGR01632">
    <property type="entry name" value="L11_bact"/>
    <property type="match status" value="1"/>
</dbReference>
<dbReference type="PANTHER" id="PTHR11661">
    <property type="entry name" value="60S RIBOSOMAL PROTEIN L12"/>
    <property type="match status" value="1"/>
</dbReference>
<dbReference type="PANTHER" id="PTHR11661:SF1">
    <property type="entry name" value="LARGE RIBOSOMAL SUBUNIT PROTEIN UL11M"/>
    <property type="match status" value="1"/>
</dbReference>
<dbReference type="Pfam" id="PF00298">
    <property type="entry name" value="Ribosomal_L11"/>
    <property type="match status" value="1"/>
</dbReference>
<dbReference type="Pfam" id="PF03946">
    <property type="entry name" value="Ribosomal_L11_N"/>
    <property type="match status" value="1"/>
</dbReference>
<dbReference type="SMART" id="SM00649">
    <property type="entry name" value="RL11"/>
    <property type="match status" value="1"/>
</dbReference>
<dbReference type="SUPFAM" id="SSF54747">
    <property type="entry name" value="Ribosomal L11/L12e N-terminal domain"/>
    <property type="match status" value="1"/>
</dbReference>
<dbReference type="SUPFAM" id="SSF46906">
    <property type="entry name" value="Ribosomal protein L11, C-terminal domain"/>
    <property type="match status" value="1"/>
</dbReference>
<accession>Q18CE5</accession>
<comment type="function">
    <text evidence="1">Forms part of the ribosomal stalk which helps the ribosome interact with GTP-bound translation factors.</text>
</comment>
<comment type="subunit">
    <text evidence="1">Part of the ribosomal stalk of the 50S ribosomal subunit. Interacts with L10 and the large rRNA to form the base of the stalk. L10 forms an elongated spine to which L12 dimers bind in a sequential fashion forming a multimeric L10(L12)X complex.</text>
</comment>
<comment type="PTM">
    <text evidence="1">One or more lysine residues are methylated.</text>
</comment>
<comment type="similarity">
    <text evidence="1">Belongs to the universal ribosomal protein uL11 family.</text>
</comment>
<proteinExistence type="inferred from homology"/>
<keyword id="KW-0488">Methylation</keyword>
<keyword id="KW-1185">Reference proteome</keyword>
<keyword id="KW-0687">Ribonucleoprotein</keyword>
<keyword id="KW-0689">Ribosomal protein</keyword>
<keyword id="KW-0694">RNA-binding</keyword>
<keyword id="KW-0699">rRNA-binding</keyword>
<protein>
    <recommendedName>
        <fullName evidence="1">Large ribosomal subunit protein uL11</fullName>
    </recommendedName>
    <alternativeName>
        <fullName evidence="2">50S ribosomal protein L11</fullName>
    </alternativeName>
</protein>